<accession>P0AC92</accession>
<accession>P52635</accession>
<accession>Q2EER1</accession>
<organism>
    <name type="scientific">Escherichia coli (strain K12)</name>
    <dbReference type="NCBI Taxonomy" id="83333"/>
    <lineage>
        <taxon>Bacteria</taxon>
        <taxon>Pseudomonadati</taxon>
        <taxon>Pseudomonadota</taxon>
        <taxon>Gammaproteobacteria</taxon>
        <taxon>Enterobacterales</taxon>
        <taxon>Enterobacteriaceae</taxon>
        <taxon>Escherichia</taxon>
    </lineage>
</organism>
<reference key="1">
    <citation type="journal article" date="1996" name="J. Bacteriol.">
        <title>Increased unsaturated fatty acid production associated with a suppressor of the fabA6(Ts) mutation in Escherichia coli.</title>
        <authorList>
            <person name="Rock C.O."/>
            <person name="Tsay J.-T."/>
            <person name="Heath R."/>
            <person name="Jackowski S."/>
        </authorList>
    </citation>
    <scope>NUCLEOTIDE SEQUENCE [GENOMIC DNA]</scope>
    <source>
        <strain>K12</strain>
    </source>
</reference>
<reference key="2">
    <citation type="journal article" date="1996" name="DNA Res.">
        <title>A 718-kb DNA sequence of the Escherichia coli K-12 genome corresponding to the 12.7-28.0 min region on the linkage map.</title>
        <authorList>
            <person name="Oshima T."/>
            <person name="Aiba H."/>
            <person name="Baba T."/>
            <person name="Fujita K."/>
            <person name="Hayashi K."/>
            <person name="Honjo A."/>
            <person name="Ikemoto K."/>
            <person name="Inada T."/>
            <person name="Itoh T."/>
            <person name="Kajihara M."/>
            <person name="Kanai K."/>
            <person name="Kashimoto K."/>
            <person name="Kimura S."/>
            <person name="Kitagawa M."/>
            <person name="Makino K."/>
            <person name="Masuda S."/>
            <person name="Miki T."/>
            <person name="Mizobuchi K."/>
            <person name="Mori H."/>
            <person name="Motomura K."/>
            <person name="Nakamura Y."/>
            <person name="Nashimoto H."/>
            <person name="Nishio Y."/>
            <person name="Saito N."/>
            <person name="Sampei G."/>
            <person name="Seki Y."/>
            <person name="Tagami H."/>
            <person name="Takemoto K."/>
            <person name="Wada C."/>
            <person name="Yamamoto Y."/>
            <person name="Yano M."/>
            <person name="Horiuchi T."/>
        </authorList>
    </citation>
    <scope>NUCLEOTIDE SEQUENCE [LARGE SCALE GENOMIC DNA]</scope>
    <source>
        <strain>K12 / W3110 / ATCC 27325 / DSM 5911</strain>
    </source>
</reference>
<reference key="3">
    <citation type="journal article" date="1997" name="Science">
        <title>The complete genome sequence of Escherichia coli K-12.</title>
        <authorList>
            <person name="Blattner F.R."/>
            <person name="Plunkett G. III"/>
            <person name="Bloch C.A."/>
            <person name="Perna N.T."/>
            <person name="Burland V."/>
            <person name="Riley M."/>
            <person name="Collado-Vides J."/>
            <person name="Glasner J.D."/>
            <person name="Rode C.K."/>
            <person name="Mayhew G.F."/>
            <person name="Gregor J."/>
            <person name="Davis N.W."/>
            <person name="Kirkpatrick H.A."/>
            <person name="Goeden M.A."/>
            <person name="Rose D.J."/>
            <person name="Mau B."/>
            <person name="Shao Y."/>
        </authorList>
    </citation>
    <scope>NUCLEOTIDE SEQUENCE [LARGE SCALE GENOMIC DNA]</scope>
    <source>
        <strain>K12 / MG1655 / ATCC 47076</strain>
    </source>
</reference>
<reference key="4">
    <citation type="journal article" date="2006" name="Mol. Syst. Biol.">
        <title>Highly accurate genome sequences of Escherichia coli K-12 strains MG1655 and W3110.</title>
        <authorList>
            <person name="Hayashi K."/>
            <person name="Morooka N."/>
            <person name="Yamamoto Y."/>
            <person name="Fujita K."/>
            <person name="Isono K."/>
            <person name="Choi S."/>
            <person name="Ohtsubo E."/>
            <person name="Baba T."/>
            <person name="Wanner B.L."/>
            <person name="Mori H."/>
            <person name="Horiuchi T."/>
        </authorList>
    </citation>
    <scope>NUCLEOTIDE SEQUENCE [LARGE SCALE GENOMIC DNA]</scope>
    <source>
        <strain>K12 / W3110 / ATCC 27325 / DSM 5911</strain>
    </source>
</reference>
<reference key="5">
    <citation type="journal article" date="2001" name="J. Bacteriol.">
        <title>Overexpression of yccL (gnsA) and ydfY (gnsB) increases levels of unsaturated fatty acids and suppresses both the temperature-sensitive fabA6 mutation and cold-sensitive secG null mutation of Escherichia coli.</title>
        <authorList>
            <person name="Sugai R."/>
            <person name="Shimizu H."/>
            <person name="Nishiyama K."/>
            <person name="Tokuda H."/>
        </authorList>
    </citation>
    <scope>FUNCTION</scope>
</reference>
<keyword id="KW-0002">3D-structure</keyword>
<keyword id="KW-1185">Reference proteome</keyword>
<proteinExistence type="evidence at protein level"/>
<gene>
    <name type="primary">gnsA</name>
    <name type="synonym">yccL</name>
    <name type="ordered locus">b4517</name>
    <name type="ordered locus">JW0976</name>
</gene>
<feature type="chain" id="PRO_0000201722" description="Protein GnsA">
    <location>
        <begin position="1"/>
        <end position="57"/>
    </location>
</feature>
<feature type="helix" evidence="3">
    <location>
        <begin position="3"/>
        <end position="29"/>
    </location>
</feature>
<feature type="strand" evidence="3">
    <location>
        <begin position="30"/>
        <end position="43"/>
    </location>
</feature>
<feature type="strand" evidence="3">
    <location>
        <begin position="46"/>
        <end position="57"/>
    </location>
</feature>
<comment type="function">
    <text evidence="1">Overexpression increases levels of unsaturated fatty acids and suppresses both the temperature-sensitive fabA6 mutation and cold-sensitive secG null mutation.</text>
</comment>
<comment type="interaction">
    <interactant intactId="EBI-1121356">
        <id>P0AC92</id>
    </interactant>
    <interactant intactId="EBI-1121356">
        <id>P0AC92</id>
        <label>gnsA</label>
    </interactant>
    <organismsDiffer>false</organismsDiffer>
    <experiments>2</experiments>
</comment>
<comment type="similarity">
    <text evidence="2">Belongs to the gns family.</text>
</comment>
<evidence type="ECO:0000269" key="1">
    <source>
    </source>
</evidence>
<evidence type="ECO:0000305" key="2"/>
<evidence type="ECO:0007829" key="3">
    <source>
        <dbReference type="PDB" id="4XO1"/>
    </source>
</evidence>
<name>GNSA_ECOLI</name>
<protein>
    <recommendedName>
        <fullName>Protein GnsA</fullName>
    </recommendedName>
</protein>
<dbReference type="EMBL" id="U38541">
    <property type="status" value="NOT_ANNOTATED_CDS"/>
    <property type="molecule type" value="Genomic_DNA"/>
</dbReference>
<dbReference type="EMBL" id="U00096">
    <property type="protein sequence ID" value="ABD18647.1"/>
    <property type="molecule type" value="Genomic_DNA"/>
</dbReference>
<dbReference type="EMBL" id="AP009048">
    <property type="protein sequence ID" value="BAA35758.1"/>
    <property type="molecule type" value="Genomic_DNA"/>
</dbReference>
<dbReference type="RefSeq" id="WP_001019197.1">
    <property type="nucleotide sequence ID" value="NZ_STEB01000006.1"/>
</dbReference>
<dbReference type="RefSeq" id="YP_588446.1">
    <property type="nucleotide sequence ID" value="NC_000913.3"/>
</dbReference>
<dbReference type="PDB" id="4XO1">
    <property type="method" value="X-ray"/>
    <property type="resolution" value="1.80 A"/>
    <property type="chains" value="A=1-57"/>
</dbReference>
<dbReference type="PDB" id="4XO2">
    <property type="method" value="X-ray"/>
    <property type="resolution" value="1.95 A"/>
    <property type="chains" value="A/B=1-57"/>
</dbReference>
<dbReference type="PDBsum" id="4XO1"/>
<dbReference type="PDBsum" id="4XO2"/>
<dbReference type="SMR" id="P0AC92"/>
<dbReference type="BioGRID" id="4262837">
    <property type="interactions" value="21"/>
</dbReference>
<dbReference type="BioGRID" id="853386">
    <property type="interactions" value="4"/>
</dbReference>
<dbReference type="FunCoup" id="P0AC92">
    <property type="interactions" value="32"/>
</dbReference>
<dbReference type="IntAct" id="P0AC92">
    <property type="interactions" value="9"/>
</dbReference>
<dbReference type="STRING" id="511145.b4517"/>
<dbReference type="jPOST" id="P0AC92"/>
<dbReference type="PaxDb" id="511145-b4517"/>
<dbReference type="EnsemblBacteria" id="ABD18647">
    <property type="protein sequence ID" value="ABD18647"/>
    <property type="gene ID" value="b4517"/>
</dbReference>
<dbReference type="GeneID" id="1450249"/>
<dbReference type="KEGG" id="ecj:JW0976"/>
<dbReference type="KEGG" id="eco:b4517"/>
<dbReference type="KEGG" id="ecoc:C3026_06045"/>
<dbReference type="PATRIC" id="fig|1411691.4.peg.1280"/>
<dbReference type="EchoBASE" id="EB3022"/>
<dbReference type="eggNOG" id="ENOG50332DR">
    <property type="taxonomic scope" value="Bacteria"/>
</dbReference>
<dbReference type="HOGENOM" id="CLU_197432_0_0_6"/>
<dbReference type="InParanoid" id="P0AC92"/>
<dbReference type="OrthoDB" id="6593582at2"/>
<dbReference type="PhylomeDB" id="P0AC92"/>
<dbReference type="BioCyc" id="EcoCyc:MONOMER0-1701"/>
<dbReference type="EvolutionaryTrace" id="P0AC92"/>
<dbReference type="PRO" id="PR:P0AC92"/>
<dbReference type="Proteomes" id="UP000000625">
    <property type="component" value="Chromosome"/>
</dbReference>
<dbReference type="GO" id="GO:0005829">
    <property type="term" value="C:cytosol"/>
    <property type="evidence" value="ECO:0000314"/>
    <property type="project" value="EcoCyc"/>
</dbReference>
<dbReference type="GO" id="GO:0042802">
    <property type="term" value="F:identical protein binding"/>
    <property type="evidence" value="ECO:0000353"/>
    <property type="project" value="IntAct"/>
</dbReference>
<dbReference type="GO" id="GO:0042803">
    <property type="term" value="F:protein homodimerization activity"/>
    <property type="evidence" value="ECO:0000314"/>
    <property type="project" value="EcoCyc"/>
</dbReference>
<dbReference type="InterPro" id="IPR012563">
    <property type="entry name" value="Gns"/>
</dbReference>
<dbReference type="Pfam" id="PF08178">
    <property type="entry name" value="GnsAB_toxin"/>
    <property type="match status" value="1"/>
</dbReference>
<sequence>MNIEELKKQAETEIADFIAQKIAELNKNTGKEVSEIRFTAREKMTGLESYDVKIKIM</sequence>